<gene>
    <name evidence="1" type="primary">minE</name>
    <name type="ordered locus">Hac_0988</name>
</gene>
<reference key="1">
    <citation type="journal article" date="2006" name="PLoS Genet.">
        <title>Who ate whom? Adaptive Helicobacter genomic changes that accompanied a host jump from early humans to large felines.</title>
        <authorList>
            <person name="Eppinger M."/>
            <person name="Baar C."/>
            <person name="Linz B."/>
            <person name="Raddatz G."/>
            <person name="Lanz C."/>
            <person name="Keller H."/>
            <person name="Morelli G."/>
            <person name="Gressmann H."/>
            <person name="Achtman M."/>
            <person name="Schuster S.C."/>
        </authorList>
    </citation>
    <scope>NUCLEOTIDE SEQUENCE [LARGE SCALE GENOMIC DNA]</scope>
    <source>
        <strain>Sheeba</strain>
    </source>
</reference>
<keyword id="KW-0131">Cell cycle</keyword>
<keyword id="KW-0132">Cell division</keyword>
<evidence type="ECO:0000255" key="1">
    <source>
        <dbReference type="HAMAP-Rule" id="MF_00262"/>
    </source>
</evidence>
<feature type="chain" id="PRO_0000298126" description="Cell division topological specificity factor">
    <location>
        <begin position="1"/>
        <end position="77"/>
    </location>
</feature>
<accession>Q17X68</accession>
<protein>
    <recommendedName>
        <fullName evidence="1">Cell division topological specificity factor</fullName>
    </recommendedName>
</protein>
<comment type="function">
    <text evidence="1">Prevents the cell division inhibition by proteins MinC and MinD at internal division sites while permitting inhibition at polar sites. This ensures cell division at the proper site by restricting the formation of a division septum at the midpoint of the long axis of the cell.</text>
</comment>
<comment type="similarity">
    <text evidence="1">Belongs to the MinE family.</text>
</comment>
<organism>
    <name type="scientific">Helicobacter acinonychis (strain Sheeba)</name>
    <dbReference type="NCBI Taxonomy" id="382638"/>
    <lineage>
        <taxon>Bacteria</taxon>
        <taxon>Pseudomonadati</taxon>
        <taxon>Campylobacterota</taxon>
        <taxon>Epsilonproteobacteria</taxon>
        <taxon>Campylobacterales</taxon>
        <taxon>Helicobacteraceae</taxon>
        <taxon>Helicobacter</taxon>
    </lineage>
</organism>
<sequence length="77" mass="8879">MSLFDFFKTKGSAATATDRLKLILAKERTLNLPYMEEMRKEIIAVIQKYTKSSDIHFKTLDSNQSVETIEVEIILPK</sequence>
<dbReference type="EMBL" id="AM260522">
    <property type="protein sequence ID" value="CAJ99758.1"/>
    <property type="molecule type" value="Genomic_DNA"/>
</dbReference>
<dbReference type="RefSeq" id="WP_000051430.1">
    <property type="nucleotide sequence ID" value="NC_008229.1"/>
</dbReference>
<dbReference type="SMR" id="Q17X68"/>
<dbReference type="STRING" id="382638.Hac_0988"/>
<dbReference type="GeneID" id="31758369"/>
<dbReference type="KEGG" id="hac:Hac_0988"/>
<dbReference type="eggNOG" id="COG0851">
    <property type="taxonomic scope" value="Bacteria"/>
</dbReference>
<dbReference type="HOGENOM" id="CLU_137929_2_1_7"/>
<dbReference type="OrthoDB" id="9802655at2"/>
<dbReference type="BioCyc" id="HACI382638:HAC_RS04240-MONOMER"/>
<dbReference type="Proteomes" id="UP000000775">
    <property type="component" value="Chromosome"/>
</dbReference>
<dbReference type="GO" id="GO:0051301">
    <property type="term" value="P:cell division"/>
    <property type="evidence" value="ECO:0007669"/>
    <property type="project" value="UniProtKB-KW"/>
</dbReference>
<dbReference type="GO" id="GO:0032955">
    <property type="term" value="P:regulation of division septum assembly"/>
    <property type="evidence" value="ECO:0007669"/>
    <property type="project" value="InterPro"/>
</dbReference>
<dbReference type="Gene3D" id="3.30.1070.10">
    <property type="entry name" value="Cell division topological specificity factor MinE"/>
    <property type="match status" value="1"/>
</dbReference>
<dbReference type="HAMAP" id="MF_00262">
    <property type="entry name" value="MinE"/>
    <property type="match status" value="1"/>
</dbReference>
<dbReference type="InterPro" id="IPR005527">
    <property type="entry name" value="MinE"/>
</dbReference>
<dbReference type="InterPro" id="IPR036707">
    <property type="entry name" value="MinE_sf"/>
</dbReference>
<dbReference type="NCBIfam" id="TIGR01215">
    <property type="entry name" value="minE"/>
    <property type="match status" value="1"/>
</dbReference>
<dbReference type="NCBIfam" id="NF001422">
    <property type="entry name" value="PRK00296.1"/>
    <property type="match status" value="1"/>
</dbReference>
<dbReference type="Pfam" id="PF03776">
    <property type="entry name" value="MinE"/>
    <property type="match status" value="1"/>
</dbReference>
<dbReference type="SUPFAM" id="SSF55229">
    <property type="entry name" value="Cell division protein MinE topological specificity domain"/>
    <property type="match status" value="1"/>
</dbReference>
<name>MINE_HELAH</name>
<proteinExistence type="inferred from homology"/>